<proteinExistence type="inferred from homology"/>
<feature type="chain" id="PRO_1000121396" description="Large ribosomal subunit protein bL12">
    <location>
        <begin position="1"/>
        <end position="123"/>
    </location>
</feature>
<name>RL7_BORDL</name>
<comment type="function">
    <text evidence="1">Forms part of the ribosomal stalk which helps the ribosome interact with GTP-bound translation factors. Is thus essential for accurate translation.</text>
</comment>
<comment type="subunit">
    <text evidence="1">Homodimer. Part of the ribosomal stalk of the 50S ribosomal subunit. Forms a multimeric L10(L12)X complex, where L10 forms an elongated spine to which 2 to 4 L12 dimers bind in a sequential fashion. Binds GTP-bound translation factors.</text>
</comment>
<comment type="similarity">
    <text evidence="1">Belongs to the bacterial ribosomal protein bL12 family.</text>
</comment>
<keyword id="KW-0687">Ribonucleoprotein</keyword>
<keyword id="KW-0689">Ribosomal protein</keyword>
<protein>
    <recommendedName>
        <fullName evidence="1">Large ribosomal subunit protein bL12</fullName>
    </recommendedName>
    <alternativeName>
        <fullName evidence="2">50S ribosomal protein L7/L12</fullName>
    </alternativeName>
</protein>
<evidence type="ECO:0000255" key="1">
    <source>
        <dbReference type="HAMAP-Rule" id="MF_00368"/>
    </source>
</evidence>
<evidence type="ECO:0000305" key="2"/>
<gene>
    <name evidence="1" type="primary">rplL</name>
    <name type="ordered locus">BDU_384</name>
</gene>
<sequence>MALNKEDILTWLEEAKTSEVVELITAIEEKFGVTAAAVAVAAGPGPAAGGVEEQTEFDVMLVSFGDSKINVIKEVRAITGLGLGEAKALVESAPKAVKEGVSKSDAEEIKKKLEAVGAKVEIK</sequence>
<organism>
    <name type="scientific">Borrelia duttonii (strain Ly)</name>
    <dbReference type="NCBI Taxonomy" id="412419"/>
    <lineage>
        <taxon>Bacteria</taxon>
        <taxon>Pseudomonadati</taxon>
        <taxon>Spirochaetota</taxon>
        <taxon>Spirochaetia</taxon>
        <taxon>Spirochaetales</taxon>
        <taxon>Borreliaceae</taxon>
        <taxon>Borrelia</taxon>
    </lineage>
</organism>
<reference key="1">
    <citation type="journal article" date="2008" name="PLoS Genet.">
        <title>The genome of Borrelia recurrentis, the agent of deadly louse-borne relapsing fever, is a degraded subset of tick-borne Borrelia duttonii.</title>
        <authorList>
            <person name="Lescot M."/>
            <person name="Audic S."/>
            <person name="Robert C."/>
            <person name="Nguyen T.T."/>
            <person name="Blanc G."/>
            <person name="Cutler S.J."/>
            <person name="Wincker P."/>
            <person name="Couloux A."/>
            <person name="Claverie J.-M."/>
            <person name="Raoult D."/>
            <person name="Drancourt M."/>
        </authorList>
    </citation>
    <scope>NUCLEOTIDE SEQUENCE [LARGE SCALE GENOMIC DNA]</scope>
    <source>
        <strain>Ly</strain>
    </source>
</reference>
<dbReference type="EMBL" id="CP000976">
    <property type="protein sequence ID" value="ACH93336.1"/>
    <property type="molecule type" value="Genomic_DNA"/>
</dbReference>
<dbReference type="RefSeq" id="WP_012538147.1">
    <property type="nucleotide sequence ID" value="NC_011229.1"/>
</dbReference>
<dbReference type="SMR" id="B5RLV0"/>
<dbReference type="STRING" id="412419.BDU_384"/>
<dbReference type="KEGG" id="bdu:BDU_384"/>
<dbReference type="eggNOG" id="COG0222">
    <property type="taxonomic scope" value="Bacteria"/>
</dbReference>
<dbReference type="HOGENOM" id="CLU_086499_3_2_12"/>
<dbReference type="OrthoDB" id="9811748at2"/>
<dbReference type="Proteomes" id="UP000000611">
    <property type="component" value="Chromosome"/>
</dbReference>
<dbReference type="GO" id="GO:0022625">
    <property type="term" value="C:cytosolic large ribosomal subunit"/>
    <property type="evidence" value="ECO:0007669"/>
    <property type="project" value="TreeGrafter"/>
</dbReference>
<dbReference type="GO" id="GO:0003729">
    <property type="term" value="F:mRNA binding"/>
    <property type="evidence" value="ECO:0007669"/>
    <property type="project" value="TreeGrafter"/>
</dbReference>
<dbReference type="GO" id="GO:0003735">
    <property type="term" value="F:structural constituent of ribosome"/>
    <property type="evidence" value="ECO:0007669"/>
    <property type="project" value="InterPro"/>
</dbReference>
<dbReference type="GO" id="GO:0006412">
    <property type="term" value="P:translation"/>
    <property type="evidence" value="ECO:0007669"/>
    <property type="project" value="UniProtKB-UniRule"/>
</dbReference>
<dbReference type="CDD" id="cd00387">
    <property type="entry name" value="Ribosomal_L7_L12"/>
    <property type="match status" value="1"/>
</dbReference>
<dbReference type="FunFam" id="3.30.1390.10:FF:000001">
    <property type="entry name" value="50S ribosomal protein L7/L12"/>
    <property type="match status" value="1"/>
</dbReference>
<dbReference type="Gene3D" id="3.30.1390.10">
    <property type="match status" value="1"/>
</dbReference>
<dbReference type="Gene3D" id="1.20.5.710">
    <property type="entry name" value="Single helix bin"/>
    <property type="match status" value="1"/>
</dbReference>
<dbReference type="HAMAP" id="MF_00368">
    <property type="entry name" value="Ribosomal_bL12"/>
    <property type="match status" value="1"/>
</dbReference>
<dbReference type="InterPro" id="IPR000206">
    <property type="entry name" value="Ribosomal_bL12"/>
</dbReference>
<dbReference type="InterPro" id="IPR013823">
    <property type="entry name" value="Ribosomal_bL12_C"/>
</dbReference>
<dbReference type="InterPro" id="IPR014719">
    <property type="entry name" value="Ribosomal_bL12_C/ClpS-like"/>
</dbReference>
<dbReference type="InterPro" id="IPR008932">
    <property type="entry name" value="Ribosomal_bL12_oligo"/>
</dbReference>
<dbReference type="InterPro" id="IPR036235">
    <property type="entry name" value="Ribosomal_bL12_oligo_N_sf"/>
</dbReference>
<dbReference type="NCBIfam" id="TIGR00855">
    <property type="entry name" value="L12"/>
    <property type="match status" value="1"/>
</dbReference>
<dbReference type="PANTHER" id="PTHR45987">
    <property type="entry name" value="39S RIBOSOMAL PROTEIN L12"/>
    <property type="match status" value="1"/>
</dbReference>
<dbReference type="PANTHER" id="PTHR45987:SF4">
    <property type="entry name" value="LARGE RIBOSOMAL SUBUNIT PROTEIN BL12M"/>
    <property type="match status" value="1"/>
</dbReference>
<dbReference type="Pfam" id="PF00542">
    <property type="entry name" value="Ribosomal_L12"/>
    <property type="match status" value="1"/>
</dbReference>
<dbReference type="Pfam" id="PF16320">
    <property type="entry name" value="Ribosomal_L12_N"/>
    <property type="match status" value="1"/>
</dbReference>
<dbReference type="SUPFAM" id="SSF54736">
    <property type="entry name" value="ClpS-like"/>
    <property type="match status" value="1"/>
</dbReference>
<dbReference type="SUPFAM" id="SSF48300">
    <property type="entry name" value="Ribosomal protein L7/12, oligomerisation (N-terminal) domain"/>
    <property type="match status" value="1"/>
</dbReference>
<accession>B5RLV0</accession>